<comment type="function">
    <text evidence="1">Part of the ABC transporter complex CcmAB involved in the biogenesis of c-type cytochromes; once thought to export heme, this seems not to be the case, but its exact role is uncertain. Responsible for energy coupling to the transport system (By similarity).</text>
</comment>
<comment type="catalytic activity">
    <reaction evidence="3">
        <text>heme b(in) + ATP + H2O = heme b(out) + ADP + phosphate + H(+)</text>
        <dbReference type="Rhea" id="RHEA:19261"/>
        <dbReference type="ChEBI" id="CHEBI:15377"/>
        <dbReference type="ChEBI" id="CHEBI:15378"/>
        <dbReference type="ChEBI" id="CHEBI:30616"/>
        <dbReference type="ChEBI" id="CHEBI:43474"/>
        <dbReference type="ChEBI" id="CHEBI:60344"/>
        <dbReference type="ChEBI" id="CHEBI:456216"/>
        <dbReference type="EC" id="7.6.2.5"/>
    </reaction>
</comment>
<comment type="subunit">
    <text evidence="3">The complex is composed of two ATP-binding proteins (CcmA) and two transmembrane proteins (ccmB).</text>
</comment>
<comment type="subcellular location">
    <subcellularLocation>
        <location evidence="1">Mitochondrion membrane</location>
        <topology evidence="1">Peripheral membrane protein</topology>
    </subcellularLocation>
</comment>
<comment type="similarity">
    <text evidence="3">Belongs to the ABC transporter superfamily. CcmA exporter (TC 3.A.1.107) family.</text>
</comment>
<dbReference type="EC" id="7.6.2.5" evidence="3"/>
<dbReference type="EMBL" id="AF007261">
    <property type="protein sequence ID" value="AAD11907.1"/>
    <property type="molecule type" value="Genomic_DNA"/>
</dbReference>
<dbReference type="PIR" id="S78174">
    <property type="entry name" value="S78174"/>
</dbReference>
<dbReference type="RefSeq" id="NP_044792.1">
    <property type="nucleotide sequence ID" value="NC_001823.1"/>
</dbReference>
<dbReference type="SMR" id="O21280"/>
<dbReference type="GeneID" id="801082"/>
<dbReference type="GO" id="GO:0031966">
    <property type="term" value="C:mitochondrial membrane"/>
    <property type="evidence" value="ECO:0007669"/>
    <property type="project" value="UniProtKB-SubCell"/>
</dbReference>
<dbReference type="GO" id="GO:0015439">
    <property type="term" value="F:ABC-type heme transporter activity"/>
    <property type="evidence" value="ECO:0007669"/>
    <property type="project" value="UniProtKB-EC"/>
</dbReference>
<dbReference type="GO" id="GO:0005524">
    <property type="term" value="F:ATP binding"/>
    <property type="evidence" value="ECO:0007669"/>
    <property type="project" value="UniProtKB-KW"/>
</dbReference>
<dbReference type="GO" id="GO:0016887">
    <property type="term" value="F:ATP hydrolysis activity"/>
    <property type="evidence" value="ECO:0007669"/>
    <property type="project" value="InterPro"/>
</dbReference>
<dbReference type="GO" id="GO:0017004">
    <property type="term" value="P:cytochrome complex assembly"/>
    <property type="evidence" value="ECO:0007669"/>
    <property type="project" value="UniProtKB-KW"/>
</dbReference>
<dbReference type="Gene3D" id="3.40.50.300">
    <property type="entry name" value="P-loop containing nucleotide triphosphate hydrolases"/>
    <property type="match status" value="1"/>
</dbReference>
<dbReference type="InterPro" id="IPR003593">
    <property type="entry name" value="AAA+_ATPase"/>
</dbReference>
<dbReference type="InterPro" id="IPR003439">
    <property type="entry name" value="ABC_transporter-like_ATP-bd"/>
</dbReference>
<dbReference type="InterPro" id="IPR017871">
    <property type="entry name" value="ABC_transporter-like_CS"/>
</dbReference>
<dbReference type="InterPro" id="IPR005895">
    <property type="entry name" value="ABC_transptr_haem_export_CcmA"/>
</dbReference>
<dbReference type="InterPro" id="IPR027417">
    <property type="entry name" value="P-loop_NTPase"/>
</dbReference>
<dbReference type="NCBIfam" id="TIGR01189">
    <property type="entry name" value="ccmA"/>
    <property type="match status" value="1"/>
</dbReference>
<dbReference type="PANTHER" id="PTHR43499">
    <property type="entry name" value="ABC TRANSPORTER I FAMILY MEMBER 1"/>
    <property type="match status" value="1"/>
</dbReference>
<dbReference type="PANTHER" id="PTHR43499:SF1">
    <property type="entry name" value="ABC TRANSPORTER I FAMILY MEMBER 1"/>
    <property type="match status" value="1"/>
</dbReference>
<dbReference type="Pfam" id="PF00005">
    <property type="entry name" value="ABC_tran"/>
    <property type="match status" value="1"/>
</dbReference>
<dbReference type="SMART" id="SM00382">
    <property type="entry name" value="AAA"/>
    <property type="match status" value="1"/>
</dbReference>
<dbReference type="SUPFAM" id="SSF52540">
    <property type="entry name" value="P-loop containing nucleoside triphosphate hydrolases"/>
    <property type="match status" value="1"/>
</dbReference>
<dbReference type="PROSITE" id="PS00211">
    <property type="entry name" value="ABC_TRANSPORTER_1"/>
    <property type="match status" value="1"/>
</dbReference>
<dbReference type="PROSITE" id="PS50893">
    <property type="entry name" value="ABC_TRANSPORTER_2"/>
    <property type="match status" value="1"/>
</dbReference>
<dbReference type="PROSITE" id="PS51243">
    <property type="entry name" value="CCMA"/>
    <property type="match status" value="1"/>
</dbReference>
<reference key="1">
    <citation type="journal article" date="1997" name="Nature">
        <title>An ancestral mitochondrial DNA resembling a eubacterial genome in miniature.</title>
        <authorList>
            <person name="Lang B.F."/>
            <person name="Burger G."/>
            <person name="O'Kelly C.J."/>
            <person name="Cedergren R."/>
            <person name="Golding G.B."/>
            <person name="Lemieux C."/>
            <person name="Sankoff D."/>
            <person name="Turmel M."/>
            <person name="Gray M.W."/>
        </authorList>
    </citation>
    <scope>NUCLEOTIDE SEQUENCE [GENOMIC DNA]</scope>
    <source>
        <strain>ATCC 50394</strain>
    </source>
</reference>
<name>CCMA_RECAM</name>
<keyword id="KW-0067">ATP-binding</keyword>
<keyword id="KW-0201">Cytochrome c-type biogenesis</keyword>
<keyword id="KW-0472">Membrane</keyword>
<keyword id="KW-0496">Mitochondrion</keyword>
<keyword id="KW-0547">Nucleotide-binding</keyword>
<keyword id="KW-1278">Translocase</keyword>
<keyword id="KW-0813">Transport</keyword>
<gene>
    <name type="primary">CCMA</name>
</gene>
<evidence type="ECO:0000250" key="1"/>
<evidence type="ECO:0000255" key="2"/>
<evidence type="ECO:0000305" key="3"/>
<organism>
    <name type="scientific">Reclinomonas americana</name>
    <dbReference type="NCBI Taxonomy" id="48483"/>
    <lineage>
        <taxon>Eukaryota</taxon>
        <taxon>Discoba</taxon>
        <taxon>Jakobida</taxon>
        <taxon>Histionina</taxon>
        <taxon>Histionidae</taxon>
        <taxon>Reclinomonas</taxon>
    </lineage>
</organism>
<protein>
    <recommendedName>
        <fullName>Cytochrome c biogenesis ATP-binding export protein CcmA</fullName>
        <ecNumber evidence="3">7.6.2.5</ecNumber>
    </recommendedName>
    <alternativeName>
        <fullName>Heme exporter protein A</fullName>
    </alternativeName>
</protein>
<geneLocation type="mitochondrion"/>
<sequence>MNLTKIQNLTIHNITGIRSNKIIFQNINFSLEKGSLFIIQGSNGSGKTTLLKIISGLLPKSQGDIIINNNFISENYLKDSLFYMDSTPSFKEDITLLDYLIYWNTLYNGLQNISYEYIRTSLFQLGLSHLQNKKISTLSLGQKKRLLISKLLLTNKQLWILDEPLIGLDKYWIKIFSTILLKHCKRGGIIIMSTHTDLNIKKNTFLILNTTNKFIQTLNNLI</sequence>
<feature type="chain" id="PRO_0000092229" description="Cytochrome c biogenesis ATP-binding export protein CcmA">
    <location>
        <begin position="1"/>
        <end position="222"/>
    </location>
</feature>
<feature type="domain" description="ABC transporter">
    <location>
        <begin position="9"/>
        <end position="222"/>
    </location>
</feature>
<feature type="binding site" evidence="2">
    <location>
        <begin position="41"/>
        <end position="48"/>
    </location>
    <ligand>
        <name>ATP</name>
        <dbReference type="ChEBI" id="CHEBI:30616"/>
    </ligand>
</feature>
<proteinExistence type="inferred from homology"/>
<accession>O21280</accession>